<comment type="subcellular location">
    <subcellularLocation>
        <location>Secreted</location>
    </subcellularLocation>
</comment>
<comment type="PTM">
    <text>Glycosylated.</text>
</comment>
<comment type="similarity">
    <text evidence="2">Belongs to the cerato-platanin family.</text>
</comment>
<comment type="sequence caution" evidence="2">
    <conflict type="frameshift">
        <sequence resource="EMBL-CDS" id="AAB00101"/>
    </conflict>
</comment>
<dbReference type="EMBL" id="L36551">
    <property type="protein sequence ID" value="AAB00101.1"/>
    <property type="status" value="ALT_FRAME"/>
    <property type="molecule type" value="Genomic_DNA"/>
</dbReference>
<dbReference type="EMBL" id="AY158466">
    <property type="protein sequence ID" value="AAN73410.1"/>
    <property type="molecule type" value="Genomic_DNA"/>
</dbReference>
<dbReference type="EMBL" id="ACFW01000049">
    <property type="protein sequence ID" value="EER23833.1"/>
    <property type="molecule type" value="Genomic_DNA"/>
</dbReference>
<dbReference type="RefSeq" id="XP_003065978.1">
    <property type="nucleotide sequence ID" value="XM_003065932.1"/>
</dbReference>
<dbReference type="SMR" id="P0CW95"/>
<dbReference type="KEGG" id="cpw:9691448"/>
<dbReference type="VEuPathDB" id="FungiDB:CPC735_052030"/>
<dbReference type="HOGENOM" id="CLU_111635_0_0_1"/>
<dbReference type="OrthoDB" id="4898945at2759"/>
<dbReference type="Proteomes" id="UP000009084">
    <property type="component" value="Unassembled WGS sequence"/>
</dbReference>
<dbReference type="GO" id="GO:0005576">
    <property type="term" value="C:extracellular region"/>
    <property type="evidence" value="ECO:0007669"/>
    <property type="project" value="UniProtKB-SubCell"/>
</dbReference>
<dbReference type="CDD" id="cd22778">
    <property type="entry name" value="DPBB_CEPL-like"/>
    <property type="match status" value="1"/>
</dbReference>
<dbReference type="Gene3D" id="2.40.40.10">
    <property type="entry name" value="RlpA-like domain"/>
    <property type="match status" value="1"/>
</dbReference>
<dbReference type="InterPro" id="IPR010829">
    <property type="entry name" value="Cerato-platanin"/>
</dbReference>
<dbReference type="InterPro" id="IPR036908">
    <property type="entry name" value="RlpA-like_sf"/>
</dbReference>
<dbReference type="Pfam" id="PF07249">
    <property type="entry name" value="Cerato-platanin"/>
    <property type="match status" value="1"/>
</dbReference>
<dbReference type="SUPFAM" id="SSF50685">
    <property type="entry name" value="Barwin-like endoglucanases"/>
    <property type="match status" value="1"/>
</dbReference>
<feature type="signal peptide" evidence="1">
    <location>
        <begin position="1"/>
        <end position="20"/>
    </location>
</feature>
<feature type="chain" id="PRO_0000004999" description="Heat-stable 19 kDa antigen">
    <location>
        <begin position="21"/>
        <end position="146"/>
    </location>
</feature>
<evidence type="ECO:0000255" key="1"/>
<evidence type="ECO:0000305" key="2"/>
<organism>
    <name type="scientific">Coccidioides posadasii (strain C735)</name>
    <name type="common">Valley fever fungus</name>
    <dbReference type="NCBI Taxonomy" id="222929"/>
    <lineage>
        <taxon>Eukaryota</taxon>
        <taxon>Fungi</taxon>
        <taxon>Dikarya</taxon>
        <taxon>Ascomycota</taxon>
        <taxon>Pezizomycotina</taxon>
        <taxon>Eurotiomycetes</taxon>
        <taxon>Eurotiomycetidae</taxon>
        <taxon>Onygenales</taxon>
        <taxon>Onygenaceae</taxon>
        <taxon>Coccidioides</taxon>
    </lineage>
</organism>
<proteinExistence type="evidence at protein level"/>
<keyword id="KW-0903">Direct protein sequencing</keyword>
<keyword id="KW-0325">Glycoprotein</keyword>
<keyword id="KW-0964">Secreted</keyword>
<keyword id="KW-0732">Signal</keyword>
<sequence length="146" mass="15559">MKFSLLSAIAAAVFVPFTSATPLASTADLSYDTHYDDPSLPLSGVTCSDGDNGMITKGYNTAGEIPNYPHVGGAFTVETWNSPNCGKCYKVTYNAKTIFLTAIDHSNSGFNIAKKSMDVLTNGRAEELGRIKVTYEEVASSLCGLK</sequence>
<protein>
    <recommendedName>
        <fullName>Heat-stable 19 kDa antigen</fullName>
    </recommendedName>
    <alternativeName>
        <fullName>Coccidioides-specific antigen</fullName>
        <shortName>CS antigen</shortName>
        <shortName>CS-AG</shortName>
    </alternativeName>
    <alternativeName>
        <fullName>Precipitin antigen</fullName>
    </alternativeName>
    <alternativeName>
        <fullName>TP-AG</fullName>
    </alternativeName>
</protein>
<accession>P0CW95</accession>
<accession>C5PH30</accession>
<accession>Q00398</accession>
<accession>Q8J1X8</accession>
<name>AG19_COCP7</name>
<gene>
    <name type="primary">CSA</name>
    <name type="synonym">CAG</name>
    <name type="ORF">CPC735_052030</name>
</gene>
<reference key="1">
    <citation type="journal article" date="1995" name="Infect. Immun.">
        <title>Molecular and biochemical characterization of a Coccidioides immitis-specific antigen.</title>
        <authorList>
            <person name="Pan S."/>
            <person name="Cole G.T."/>
        </authorList>
    </citation>
    <scope>NUCLEOTIDE SEQUENCE [GENOMIC DNA]</scope>
    <scope>PROTEIN SEQUENCE OF 24-79 AND 81-100</scope>
    <source>
        <strain>C735</strain>
    </source>
</reference>
<reference key="2">
    <citation type="submission" date="2002-10" db="EMBL/GenBank/DDBJ databases">
        <title>Molecular characterization of the Coccidioides-specific antigen.</title>
        <authorList>
            <person name="Cole G.T."/>
            <person name="Yu J.-J."/>
            <person name="Pan S."/>
        </authorList>
    </citation>
    <scope>SEQUENCE REVISION</scope>
    <scope>IDENTIFICATION OF FRAMESHIFT</scope>
    <source>
        <strain>C735</strain>
    </source>
</reference>
<reference key="3">
    <citation type="journal article" date="2009" name="Genome Res.">
        <title>Comparative genomic analyses of the human fungal pathogens Coccidioides and their relatives.</title>
        <authorList>
            <person name="Sharpton T.J."/>
            <person name="Stajich J.E."/>
            <person name="Rounsley S.D."/>
            <person name="Gardner M.J."/>
            <person name="Wortman J.R."/>
            <person name="Jordar V.S."/>
            <person name="Maiti R."/>
            <person name="Kodira C.D."/>
            <person name="Neafsey D.E."/>
            <person name="Zeng Q."/>
            <person name="Hung C.-Y."/>
            <person name="McMahan C."/>
            <person name="Muszewska A."/>
            <person name="Grynberg M."/>
            <person name="Mandel M.A."/>
            <person name="Kellner E.M."/>
            <person name="Barker B.M."/>
            <person name="Galgiani J.N."/>
            <person name="Orbach M.J."/>
            <person name="Kirkland T.N."/>
            <person name="Cole G.T."/>
            <person name="Henn M.R."/>
            <person name="Birren B.W."/>
            <person name="Taylor J.W."/>
        </authorList>
    </citation>
    <scope>NUCLEOTIDE SEQUENCE [LARGE SCALE GENOMIC DNA]</scope>
    <source>
        <strain>C735</strain>
    </source>
</reference>